<keyword id="KW-0066">ATP synthesis</keyword>
<keyword id="KW-0997">Cell inner membrane</keyword>
<keyword id="KW-1003">Cell membrane</keyword>
<keyword id="KW-0139">CF(1)</keyword>
<keyword id="KW-0375">Hydrogen ion transport</keyword>
<keyword id="KW-0406">Ion transport</keyword>
<keyword id="KW-0472">Membrane</keyword>
<keyword id="KW-0813">Transport</keyword>
<dbReference type="EMBL" id="FM200053">
    <property type="protein sequence ID" value="CAR61733.1"/>
    <property type="molecule type" value="Genomic_DNA"/>
</dbReference>
<dbReference type="RefSeq" id="WP_001251971.1">
    <property type="nucleotide sequence ID" value="NC_011147.1"/>
</dbReference>
<dbReference type="SMR" id="B5BIN5"/>
<dbReference type="KEGG" id="sek:SSPA3458"/>
<dbReference type="HOGENOM" id="CLU_084338_2_0_6"/>
<dbReference type="Proteomes" id="UP000001869">
    <property type="component" value="Chromosome"/>
</dbReference>
<dbReference type="GO" id="GO:0005886">
    <property type="term" value="C:plasma membrane"/>
    <property type="evidence" value="ECO:0007669"/>
    <property type="project" value="UniProtKB-SubCell"/>
</dbReference>
<dbReference type="GO" id="GO:0045259">
    <property type="term" value="C:proton-transporting ATP synthase complex"/>
    <property type="evidence" value="ECO:0007669"/>
    <property type="project" value="UniProtKB-KW"/>
</dbReference>
<dbReference type="GO" id="GO:0005524">
    <property type="term" value="F:ATP binding"/>
    <property type="evidence" value="ECO:0007669"/>
    <property type="project" value="UniProtKB-UniRule"/>
</dbReference>
<dbReference type="GO" id="GO:0046933">
    <property type="term" value="F:proton-transporting ATP synthase activity, rotational mechanism"/>
    <property type="evidence" value="ECO:0007669"/>
    <property type="project" value="UniProtKB-UniRule"/>
</dbReference>
<dbReference type="CDD" id="cd12152">
    <property type="entry name" value="F1-ATPase_delta"/>
    <property type="match status" value="1"/>
</dbReference>
<dbReference type="FunFam" id="1.20.5.440:FF:000001">
    <property type="entry name" value="ATP synthase epsilon chain"/>
    <property type="match status" value="1"/>
</dbReference>
<dbReference type="FunFam" id="2.60.15.10:FF:000001">
    <property type="entry name" value="ATP synthase epsilon chain"/>
    <property type="match status" value="1"/>
</dbReference>
<dbReference type="Gene3D" id="1.20.5.440">
    <property type="entry name" value="ATP synthase delta/epsilon subunit, C-terminal domain"/>
    <property type="match status" value="1"/>
</dbReference>
<dbReference type="Gene3D" id="2.60.15.10">
    <property type="entry name" value="F0F1 ATP synthase delta/epsilon subunit, N-terminal"/>
    <property type="match status" value="1"/>
</dbReference>
<dbReference type="HAMAP" id="MF_00530">
    <property type="entry name" value="ATP_synth_epsil_bac"/>
    <property type="match status" value="1"/>
</dbReference>
<dbReference type="InterPro" id="IPR036794">
    <property type="entry name" value="ATP_F1_dsu/esu_C_sf"/>
</dbReference>
<dbReference type="InterPro" id="IPR001469">
    <property type="entry name" value="ATP_synth_F1_dsu/esu"/>
</dbReference>
<dbReference type="InterPro" id="IPR020546">
    <property type="entry name" value="ATP_synth_F1_dsu/esu_N"/>
</dbReference>
<dbReference type="InterPro" id="IPR020547">
    <property type="entry name" value="ATP_synth_F1_esu_C"/>
</dbReference>
<dbReference type="InterPro" id="IPR036771">
    <property type="entry name" value="ATPsynth_dsu/esu_N"/>
</dbReference>
<dbReference type="NCBIfam" id="TIGR01216">
    <property type="entry name" value="ATP_synt_epsi"/>
    <property type="match status" value="1"/>
</dbReference>
<dbReference type="NCBIfam" id="NF001847">
    <property type="entry name" value="PRK00571.1-4"/>
    <property type="match status" value="1"/>
</dbReference>
<dbReference type="PANTHER" id="PTHR13822">
    <property type="entry name" value="ATP SYNTHASE DELTA/EPSILON CHAIN"/>
    <property type="match status" value="1"/>
</dbReference>
<dbReference type="PANTHER" id="PTHR13822:SF10">
    <property type="entry name" value="ATP SYNTHASE EPSILON CHAIN, CHLOROPLASTIC"/>
    <property type="match status" value="1"/>
</dbReference>
<dbReference type="Pfam" id="PF00401">
    <property type="entry name" value="ATP-synt_DE"/>
    <property type="match status" value="1"/>
</dbReference>
<dbReference type="Pfam" id="PF02823">
    <property type="entry name" value="ATP-synt_DE_N"/>
    <property type="match status" value="1"/>
</dbReference>
<dbReference type="SUPFAM" id="SSF46604">
    <property type="entry name" value="Epsilon subunit of F1F0-ATP synthase C-terminal domain"/>
    <property type="match status" value="1"/>
</dbReference>
<dbReference type="SUPFAM" id="SSF51344">
    <property type="entry name" value="Epsilon subunit of F1F0-ATP synthase N-terminal domain"/>
    <property type="match status" value="1"/>
</dbReference>
<organism>
    <name type="scientific">Salmonella paratyphi A (strain AKU_12601)</name>
    <dbReference type="NCBI Taxonomy" id="554290"/>
    <lineage>
        <taxon>Bacteria</taxon>
        <taxon>Pseudomonadati</taxon>
        <taxon>Pseudomonadota</taxon>
        <taxon>Gammaproteobacteria</taxon>
        <taxon>Enterobacterales</taxon>
        <taxon>Enterobacteriaceae</taxon>
        <taxon>Salmonella</taxon>
    </lineage>
</organism>
<protein>
    <recommendedName>
        <fullName evidence="1">ATP synthase epsilon chain</fullName>
    </recommendedName>
    <alternativeName>
        <fullName evidence="1">ATP synthase F1 sector epsilon subunit</fullName>
    </alternativeName>
    <alternativeName>
        <fullName evidence="1">F-ATPase epsilon subunit</fullName>
    </alternativeName>
</protein>
<feature type="chain" id="PRO_1000127889" description="ATP synthase epsilon chain">
    <location>
        <begin position="1"/>
        <end position="139"/>
    </location>
</feature>
<accession>B5BIN5</accession>
<evidence type="ECO:0000255" key="1">
    <source>
        <dbReference type="HAMAP-Rule" id="MF_00530"/>
    </source>
</evidence>
<gene>
    <name evidence="1" type="primary">atpC</name>
    <name type="ordered locus">SSPA3458</name>
</gene>
<proteinExistence type="inferred from homology"/>
<sequence>MAMTYHLDVVSAEQQMFSGLVEKIQVTGSEGELGIYPGHAPLLTAIKPGMIRIVKQHGHEEFIYLSGGILEVQPGSVTVLADTAIRGQDLDEARALEAKRKAEEHIKSSHGDVDYAQASAELAKAIAKLRVIELTKKAM</sequence>
<reference key="1">
    <citation type="journal article" date="2009" name="BMC Genomics">
        <title>Pseudogene accumulation in the evolutionary histories of Salmonella enterica serovars Paratyphi A and Typhi.</title>
        <authorList>
            <person name="Holt K.E."/>
            <person name="Thomson N.R."/>
            <person name="Wain J."/>
            <person name="Langridge G.C."/>
            <person name="Hasan R."/>
            <person name="Bhutta Z.A."/>
            <person name="Quail M.A."/>
            <person name="Norbertczak H."/>
            <person name="Walker D."/>
            <person name="Simmonds M."/>
            <person name="White B."/>
            <person name="Bason N."/>
            <person name="Mungall K."/>
            <person name="Dougan G."/>
            <person name="Parkhill J."/>
        </authorList>
    </citation>
    <scope>NUCLEOTIDE SEQUENCE [LARGE SCALE GENOMIC DNA]</scope>
    <source>
        <strain>AKU_12601</strain>
    </source>
</reference>
<comment type="function">
    <text evidence="1">Produces ATP from ADP in the presence of a proton gradient across the membrane.</text>
</comment>
<comment type="subunit">
    <text evidence="1">F-type ATPases have 2 components, CF(1) - the catalytic core - and CF(0) - the membrane proton channel. CF(1) has five subunits: alpha(3), beta(3), gamma(1), delta(1), epsilon(1). CF(0) has three main subunits: a, b and c.</text>
</comment>
<comment type="subcellular location">
    <subcellularLocation>
        <location evidence="1">Cell inner membrane</location>
        <topology evidence="1">Peripheral membrane protein</topology>
    </subcellularLocation>
</comment>
<comment type="similarity">
    <text evidence="1">Belongs to the ATPase epsilon chain family.</text>
</comment>
<name>ATPE_SALPK</name>